<accession>Q923X1</accession>
<accession>E9QLT4</accession>
<accession>Q91W44</accession>
<gene>
    <name type="primary">Adgrl4</name>
    <name type="synonym">Eltd1</name>
</gene>
<protein>
    <recommendedName>
        <fullName>Adhesion G protein-coupled receptor L4</fullName>
    </recommendedName>
    <alternativeName>
        <fullName>EGF, latrophilin seven transmembrane domain-containing protein 1</fullName>
    </alternativeName>
</protein>
<name>AGRL4_MOUSE</name>
<comment type="function">
    <text evidence="2 7">Endothelial orphan receptor that acts as a key regulator of angiogenesis.</text>
</comment>
<comment type="subunit">
    <text evidence="1">Heterodimer of 2 chains generated by proteolytic processing; the large extracellular N-terminal fragment and the membrane-bound C-terminal fragment predominantly remain associated and non-covalently linked.</text>
</comment>
<comment type="subcellular location">
    <subcellularLocation>
        <location evidence="7">Cell membrane</location>
        <topology evidence="3">Multi-pass membrane protein</topology>
    </subcellularLocation>
</comment>
<comment type="induction">
    <text evidence="7">Induced by VEGF and FGF2.</text>
</comment>
<comment type="domain">
    <text evidence="1">The transmembrane domain is not required for cleavage, but it is required for dimer formation.</text>
</comment>
<comment type="PTM">
    <text evidence="2">Glycosylated.</text>
</comment>
<comment type="PTM">
    <text evidence="1">Proteolytically cleaved into 2 subunits, an extracellular alpha subunit and a seven-transmembrane subunit.</text>
</comment>
<comment type="disruption phenotype">
    <text evidence="6">No visible phenotype but deficient mice present increased cardiac hypertrophy in response to pressure overload.</text>
</comment>
<comment type="similarity">
    <text evidence="8">Belongs to the G-protein coupled receptor 2 family. Adhesion G-protein coupled receptor (ADGR) subfamily.</text>
</comment>
<sequence>MRLLPLLVGFSTLLNCSYTQNCSKTTCLPNAKCEVHNGVEACFCSQGYSGNGVTICEDIDECSESSVCGDHAVCENVNGGFSCFCREGYQTATGKSQFTPNDGSYCQDIDECSESSVCGDHAVCENVNGGFSCFCREGYQTATGKSQFTPNDGSYCQESMNSNCHLEHACIAANINKTLKRIGPITEQTTLLQEIYRNSEAELSLMDIVTYIEILTESSSLLGHPNSTTSYKDAHFNSTLTEFGETINNFVERSTHKMWDQLPTNHRRLHLTKLMHTAELVTLQIAQNTQKNSQFDMNSTDLALKVFAFDSTHMKHAHPHMNVDGGYVKISPRRKAAHGTTGNVVVAFLCYKSIGPLLSSSDNFLLDTQNDNSEGKEKVISSVISASISSNPPTLYELEKITFTLSHVKLSDKHRTQCAFWNYSVDAMNNGSWSTEGCELTHSNDTHTSCRCSHLTHFAILMSSTSSIGIKDYNILTRITQLGIIISLICLAICIFTFWFFSEIQSTRTTIHKNLCCSLFLAELVFLIGININTNKLVCSIIAGLLHYFFLAAFAWMCIEGIHLYLIVVGVIYNKGFLHKNFYIFGYLSPAVVVGFSASLGYRYYGTTKVCWLSTENNFIWSFIGPACLIILVNLLAFGVIIYKVFRHTAGLKPEVSCYENIRSCARGALALLFLLGTTWIFGVLHVVHASVVTAYLFTVSNAFQGMFIFLFLCVLSRKIQEEYYRLFKNVPCCFGCLR</sequence>
<organism>
    <name type="scientific">Mus musculus</name>
    <name type="common">Mouse</name>
    <dbReference type="NCBI Taxonomy" id="10090"/>
    <lineage>
        <taxon>Eukaryota</taxon>
        <taxon>Metazoa</taxon>
        <taxon>Chordata</taxon>
        <taxon>Craniata</taxon>
        <taxon>Vertebrata</taxon>
        <taxon>Euteleostomi</taxon>
        <taxon>Mammalia</taxon>
        <taxon>Eutheria</taxon>
        <taxon>Euarchontoglires</taxon>
        <taxon>Glires</taxon>
        <taxon>Rodentia</taxon>
        <taxon>Myomorpha</taxon>
        <taxon>Muroidea</taxon>
        <taxon>Muridae</taxon>
        <taxon>Murinae</taxon>
        <taxon>Mus</taxon>
        <taxon>Mus</taxon>
    </lineage>
</organism>
<evidence type="ECO:0000250" key="1">
    <source>
        <dbReference type="UniProtKB" id="Q9ESC1"/>
    </source>
</evidence>
<evidence type="ECO:0000250" key="2">
    <source>
        <dbReference type="UniProtKB" id="Q9HBW9"/>
    </source>
</evidence>
<evidence type="ECO:0000255" key="3"/>
<evidence type="ECO:0000255" key="4">
    <source>
        <dbReference type="PROSITE-ProRule" id="PRU00076"/>
    </source>
</evidence>
<evidence type="ECO:0000255" key="5">
    <source>
        <dbReference type="PROSITE-ProRule" id="PRU00098"/>
    </source>
</evidence>
<evidence type="ECO:0000269" key="6">
    <source>
    </source>
</evidence>
<evidence type="ECO:0000269" key="7">
    <source>
    </source>
</evidence>
<evidence type="ECO:0000305" key="8"/>
<proteinExistence type="evidence at transcript level"/>
<reference key="1">
    <citation type="journal article" date="2001" name="Proc. Natl. Acad. Sci. U.S.A.">
        <title>From hematopoiesis to neuropoiesis: evidence of overlapping genetic programs.</title>
        <authorList>
            <person name="Terskikh A.V."/>
            <person name="Easterday M.C."/>
            <person name="Li L."/>
            <person name="Hood L."/>
            <person name="Kornblum H.I."/>
            <person name="Geschwind D.H."/>
            <person name="Weissman I.L."/>
        </authorList>
    </citation>
    <scope>NUCLEOTIDE SEQUENCE [MRNA]</scope>
    <source>
        <strain>AKR/J</strain>
    </source>
</reference>
<reference key="2">
    <citation type="journal article" date="2009" name="PLoS Biol.">
        <title>Lineage-specific biology revealed by a finished genome assembly of the mouse.</title>
        <authorList>
            <person name="Church D.M."/>
            <person name="Goodstadt L."/>
            <person name="Hillier L.W."/>
            <person name="Zody M.C."/>
            <person name="Goldstein S."/>
            <person name="She X."/>
            <person name="Bult C.J."/>
            <person name="Agarwala R."/>
            <person name="Cherry J.L."/>
            <person name="DiCuccio M."/>
            <person name="Hlavina W."/>
            <person name="Kapustin Y."/>
            <person name="Meric P."/>
            <person name="Maglott D."/>
            <person name="Birtle Z."/>
            <person name="Marques A.C."/>
            <person name="Graves T."/>
            <person name="Zhou S."/>
            <person name="Teague B."/>
            <person name="Potamousis K."/>
            <person name="Churas C."/>
            <person name="Place M."/>
            <person name="Herschleb J."/>
            <person name="Runnheim R."/>
            <person name="Forrest D."/>
            <person name="Amos-Landgraf J."/>
            <person name="Schwartz D.C."/>
            <person name="Cheng Z."/>
            <person name="Lindblad-Toh K."/>
            <person name="Eichler E.E."/>
            <person name="Ponting C.P."/>
        </authorList>
    </citation>
    <scope>NUCLEOTIDE SEQUENCE [LARGE SCALE GENOMIC DNA]</scope>
    <source>
        <strain>C57BL/6J</strain>
    </source>
</reference>
<reference key="3">
    <citation type="journal article" date="2004" name="Genome Res.">
        <title>The status, quality, and expansion of the NIH full-length cDNA project: the Mammalian Gene Collection (MGC).</title>
        <authorList>
            <consortium name="The MGC Project Team"/>
        </authorList>
    </citation>
    <scope>NUCLEOTIDE SEQUENCE [LARGE SCALE MRNA]</scope>
</reference>
<reference key="4">
    <citation type="journal article" date="2012" name="PLoS ONE">
        <title>Augmented cardiac hypertrophy in response to pressure overload in mice lacking ELTD1.</title>
        <authorList>
            <person name="Xiao J."/>
            <person name="Jiang H."/>
            <person name="Zhang R."/>
            <person name="Fan G."/>
            <person name="Zhang Y."/>
            <person name="Jiang D."/>
            <person name="Li H."/>
        </authorList>
    </citation>
    <scope>DISRUPTION PHENOTYPE</scope>
</reference>
<reference key="5">
    <citation type="journal article" date="2013" name="Cancer Cell">
        <title>A core human primary tumor angiogenesis signature identifies the endothelial orphan receptor ELTD1 as a key regulator of angiogenesis.</title>
        <authorList>
            <person name="Masiero M."/>
            <person name="Simoes F.C."/>
            <person name="Han H.D."/>
            <person name="Snell C."/>
            <person name="Peterkin T."/>
            <person name="Bridges E."/>
            <person name="Mangala L.S."/>
            <person name="Wu S.Y."/>
            <person name="Pradeep S."/>
            <person name="Li D."/>
            <person name="Han C."/>
            <person name="Dalton H."/>
            <person name="Lopez-Berestein G."/>
            <person name="Tuynman J.B."/>
            <person name="Mortensen N."/>
            <person name="Li J.L."/>
            <person name="Patient R."/>
            <person name="Sood A.K."/>
            <person name="Banham A.H."/>
            <person name="Harris A.L."/>
            <person name="Buffa F.M."/>
        </authorList>
    </citation>
    <scope>FUNCTION</scope>
    <scope>SUBCELLULAR LOCATION</scope>
    <scope>TISSUE SPECIFICITY</scope>
    <scope>INDUCTION</scope>
</reference>
<keyword id="KW-0106">Calcium</keyword>
<keyword id="KW-1003">Cell membrane</keyword>
<keyword id="KW-1015">Disulfide bond</keyword>
<keyword id="KW-0245">EGF-like domain</keyword>
<keyword id="KW-0297">G-protein coupled receptor</keyword>
<keyword id="KW-0325">Glycoprotein</keyword>
<keyword id="KW-0472">Membrane</keyword>
<keyword id="KW-0675">Receptor</keyword>
<keyword id="KW-1185">Reference proteome</keyword>
<keyword id="KW-0677">Repeat</keyword>
<keyword id="KW-0732">Signal</keyword>
<keyword id="KW-0807">Transducer</keyword>
<keyword id="KW-0812">Transmembrane</keyword>
<keyword id="KW-1133">Transmembrane helix</keyword>
<dbReference type="EMBL" id="AF385682">
    <property type="protein sequence ID" value="AAK62363.1"/>
    <property type="molecule type" value="mRNA"/>
</dbReference>
<dbReference type="EMBL" id="AC127233">
    <property type="status" value="NOT_ANNOTATED_CDS"/>
    <property type="molecule type" value="Genomic_DNA"/>
</dbReference>
<dbReference type="EMBL" id="BC017134">
    <property type="protein sequence ID" value="AAH17134.1"/>
    <property type="molecule type" value="mRNA"/>
</dbReference>
<dbReference type="CCDS" id="CCDS17910.1"/>
<dbReference type="RefSeq" id="NP_573485.2">
    <property type="nucleotide sequence ID" value="NM_133222.3"/>
</dbReference>
<dbReference type="SMR" id="Q923X1"/>
<dbReference type="BioGRID" id="228419">
    <property type="interactions" value="6"/>
</dbReference>
<dbReference type="FunCoup" id="Q923X1">
    <property type="interactions" value="425"/>
</dbReference>
<dbReference type="STRING" id="10090.ENSMUSP00000041939"/>
<dbReference type="MEROPS" id="P02.013"/>
<dbReference type="GlyCosmos" id="Q923X1">
    <property type="glycosylation" value="8 sites, No reported glycans"/>
</dbReference>
<dbReference type="GlyGen" id="Q923X1">
    <property type="glycosylation" value="8 sites, 2 N-linked glycans (2 sites)"/>
</dbReference>
<dbReference type="PhosphoSitePlus" id="Q923X1"/>
<dbReference type="CPTAC" id="non-CPTAC-3686"/>
<dbReference type="PaxDb" id="10090-ENSMUSP00000041939"/>
<dbReference type="ProteomicsDB" id="296141"/>
<dbReference type="ABCD" id="Q923X1">
    <property type="antibodies" value="6 sequenced antibodies"/>
</dbReference>
<dbReference type="Antibodypedia" id="9366">
    <property type="antibodies" value="212 antibodies from 30 providers"/>
</dbReference>
<dbReference type="DNASU" id="170757"/>
<dbReference type="Ensembl" id="ENSMUST00000046977.12">
    <property type="protein sequence ID" value="ENSMUSP00000041939.8"/>
    <property type="gene ID" value="ENSMUSG00000039167.13"/>
</dbReference>
<dbReference type="GeneID" id="170757"/>
<dbReference type="KEGG" id="mmu:170757"/>
<dbReference type="UCSC" id="uc008rsj.2">
    <property type="organism name" value="mouse"/>
</dbReference>
<dbReference type="AGR" id="MGI:2655562"/>
<dbReference type="CTD" id="64123"/>
<dbReference type="MGI" id="MGI:2655562">
    <property type="gene designation" value="Adgrl4"/>
</dbReference>
<dbReference type="VEuPathDB" id="HostDB:ENSMUSG00000039167"/>
<dbReference type="eggNOG" id="KOG4193">
    <property type="taxonomic scope" value="Eukaryota"/>
</dbReference>
<dbReference type="eggNOG" id="KOG4291">
    <property type="taxonomic scope" value="Eukaryota"/>
</dbReference>
<dbReference type="GeneTree" id="ENSGT00940000158252"/>
<dbReference type="HOGENOM" id="CLU_002753_3_8_1"/>
<dbReference type="InParanoid" id="Q923X1"/>
<dbReference type="OMA" id="PYMNVDG"/>
<dbReference type="OrthoDB" id="8191206at2759"/>
<dbReference type="PhylomeDB" id="Q923X1"/>
<dbReference type="TreeFam" id="TF316380"/>
<dbReference type="BioGRID-ORCS" id="170757">
    <property type="hits" value="1 hit in 77 CRISPR screens"/>
</dbReference>
<dbReference type="ChiTaRS" id="Adgrl4">
    <property type="organism name" value="mouse"/>
</dbReference>
<dbReference type="PRO" id="PR:Q923X1"/>
<dbReference type="Proteomes" id="UP000000589">
    <property type="component" value="Chromosome 3"/>
</dbReference>
<dbReference type="RNAct" id="Q923X1">
    <property type="molecule type" value="protein"/>
</dbReference>
<dbReference type="Bgee" id="ENSMUSG00000039167">
    <property type="expression patterns" value="Expressed in brain blood vessel and 206 other cell types or tissues"/>
</dbReference>
<dbReference type="ExpressionAtlas" id="Q923X1">
    <property type="expression patterns" value="baseline and differential"/>
</dbReference>
<dbReference type="GO" id="GO:0031410">
    <property type="term" value="C:cytoplasmic vesicle"/>
    <property type="evidence" value="ECO:0000250"/>
    <property type="project" value="UniProtKB"/>
</dbReference>
<dbReference type="GO" id="GO:0005886">
    <property type="term" value="C:plasma membrane"/>
    <property type="evidence" value="ECO:0000250"/>
    <property type="project" value="UniProtKB"/>
</dbReference>
<dbReference type="GO" id="GO:0005509">
    <property type="term" value="F:calcium ion binding"/>
    <property type="evidence" value="ECO:0007669"/>
    <property type="project" value="InterPro"/>
</dbReference>
<dbReference type="GO" id="GO:0004930">
    <property type="term" value="F:G protein-coupled receptor activity"/>
    <property type="evidence" value="ECO:0007669"/>
    <property type="project" value="UniProtKB-KW"/>
</dbReference>
<dbReference type="GO" id="GO:0007166">
    <property type="term" value="P:cell surface receptor signaling pathway"/>
    <property type="evidence" value="ECO:0007669"/>
    <property type="project" value="InterPro"/>
</dbReference>
<dbReference type="GO" id="GO:0051965">
    <property type="term" value="P:positive regulation of synapse assembly"/>
    <property type="evidence" value="ECO:0007669"/>
    <property type="project" value="UniProtKB-ARBA"/>
</dbReference>
<dbReference type="CDD" id="cd15437">
    <property type="entry name" value="7tmB2_ETL"/>
    <property type="match status" value="1"/>
</dbReference>
<dbReference type="CDD" id="cd00054">
    <property type="entry name" value="EGF_CA"/>
    <property type="match status" value="2"/>
</dbReference>
<dbReference type="FunFam" id="1.20.1070.10:FF:000064">
    <property type="entry name" value="adhesion G protein-coupled receptor L4 isoform X1"/>
    <property type="match status" value="1"/>
</dbReference>
<dbReference type="FunFam" id="2.60.220.50:FF:000010">
    <property type="entry name" value="adhesion G protein-coupled receptor L4 isoform X1"/>
    <property type="match status" value="1"/>
</dbReference>
<dbReference type="FunFam" id="2.10.25.10:FF:000526">
    <property type="entry name" value="Dumpy, isoform J"/>
    <property type="match status" value="1"/>
</dbReference>
<dbReference type="FunFam" id="2.10.25.10:FF:000038">
    <property type="entry name" value="Fibrillin 2"/>
    <property type="match status" value="2"/>
</dbReference>
<dbReference type="Gene3D" id="2.60.220.50">
    <property type="match status" value="1"/>
</dbReference>
<dbReference type="Gene3D" id="2.10.25.10">
    <property type="entry name" value="Laminin"/>
    <property type="match status" value="3"/>
</dbReference>
<dbReference type="Gene3D" id="1.20.1070.10">
    <property type="entry name" value="Rhodopsin 7-helix transmembrane proteins"/>
    <property type="match status" value="1"/>
</dbReference>
<dbReference type="InterPro" id="IPR001881">
    <property type="entry name" value="EGF-like_Ca-bd_dom"/>
</dbReference>
<dbReference type="InterPro" id="IPR000742">
    <property type="entry name" value="EGF-like_dom"/>
</dbReference>
<dbReference type="InterPro" id="IPR000152">
    <property type="entry name" value="EGF-type_Asp/Asn_hydroxyl_site"/>
</dbReference>
<dbReference type="InterPro" id="IPR018097">
    <property type="entry name" value="EGF_Ca-bd_CS"/>
</dbReference>
<dbReference type="InterPro" id="IPR057244">
    <property type="entry name" value="GAIN_B"/>
</dbReference>
<dbReference type="InterPro" id="IPR032471">
    <property type="entry name" value="GAIN_dom_N"/>
</dbReference>
<dbReference type="InterPro" id="IPR046338">
    <property type="entry name" value="GAIN_dom_sf"/>
</dbReference>
<dbReference type="InterPro" id="IPR017981">
    <property type="entry name" value="GPCR_2-like_7TM"/>
</dbReference>
<dbReference type="InterPro" id="IPR000832">
    <property type="entry name" value="GPCR_2_secretin-like"/>
</dbReference>
<dbReference type="InterPro" id="IPR017983">
    <property type="entry name" value="GPCR_2_secretin-like_CS"/>
</dbReference>
<dbReference type="InterPro" id="IPR000203">
    <property type="entry name" value="GPS"/>
</dbReference>
<dbReference type="InterPro" id="IPR049883">
    <property type="entry name" value="NOTCH1_EGF-like"/>
</dbReference>
<dbReference type="PANTHER" id="PTHR12011:SF59">
    <property type="entry name" value="ADHESION G PROTEIN-COUPLED RECEPTOR L4"/>
    <property type="match status" value="1"/>
</dbReference>
<dbReference type="PANTHER" id="PTHR12011">
    <property type="entry name" value="ADHESION G-PROTEIN COUPLED RECEPTOR"/>
    <property type="match status" value="1"/>
</dbReference>
<dbReference type="Pfam" id="PF00002">
    <property type="entry name" value="7tm_2"/>
    <property type="match status" value="1"/>
</dbReference>
<dbReference type="Pfam" id="PF07645">
    <property type="entry name" value="EGF_CA"/>
    <property type="match status" value="2"/>
</dbReference>
<dbReference type="Pfam" id="PF16489">
    <property type="entry name" value="GAIN"/>
    <property type="match status" value="1"/>
</dbReference>
<dbReference type="Pfam" id="PF01825">
    <property type="entry name" value="GPS"/>
    <property type="match status" value="1"/>
</dbReference>
<dbReference type="PRINTS" id="PR00249">
    <property type="entry name" value="GPCRSECRETIN"/>
</dbReference>
<dbReference type="SMART" id="SM00181">
    <property type="entry name" value="EGF"/>
    <property type="match status" value="3"/>
</dbReference>
<dbReference type="SMART" id="SM00179">
    <property type="entry name" value="EGF_CA"/>
    <property type="match status" value="2"/>
</dbReference>
<dbReference type="SMART" id="SM00303">
    <property type="entry name" value="GPS"/>
    <property type="match status" value="1"/>
</dbReference>
<dbReference type="SUPFAM" id="SSF57196">
    <property type="entry name" value="EGF/Laminin"/>
    <property type="match status" value="2"/>
</dbReference>
<dbReference type="PROSITE" id="PS00010">
    <property type="entry name" value="ASX_HYDROXYL"/>
    <property type="match status" value="2"/>
</dbReference>
<dbReference type="PROSITE" id="PS01186">
    <property type="entry name" value="EGF_2"/>
    <property type="match status" value="1"/>
</dbReference>
<dbReference type="PROSITE" id="PS50026">
    <property type="entry name" value="EGF_3"/>
    <property type="match status" value="3"/>
</dbReference>
<dbReference type="PROSITE" id="PS01187">
    <property type="entry name" value="EGF_CA"/>
    <property type="match status" value="2"/>
</dbReference>
<dbReference type="PROSITE" id="PS00650">
    <property type="entry name" value="G_PROTEIN_RECEP_F2_2"/>
    <property type="match status" value="1"/>
</dbReference>
<dbReference type="PROSITE" id="PS50261">
    <property type="entry name" value="G_PROTEIN_RECEP_F2_4"/>
    <property type="match status" value="1"/>
</dbReference>
<dbReference type="PROSITE" id="PS50221">
    <property type="entry name" value="GAIN_B"/>
    <property type="match status" value="1"/>
</dbReference>
<feature type="signal peptide" evidence="3">
    <location>
        <begin position="1"/>
        <end position="19"/>
    </location>
</feature>
<feature type="chain" id="PRO_0000012871" description="Adhesion G protein-coupled receptor L4">
    <location>
        <begin position="20"/>
        <end position="739"/>
    </location>
</feature>
<feature type="topological domain" description="Extracellular" evidence="8">
    <location>
        <begin position="20"/>
        <end position="481"/>
    </location>
</feature>
<feature type="transmembrane region" description="Helical; Name=1" evidence="3">
    <location>
        <begin position="482"/>
        <end position="502"/>
    </location>
</feature>
<feature type="topological domain" description="Cytoplasmic" evidence="8">
    <location>
        <begin position="503"/>
        <end position="513"/>
    </location>
</feature>
<feature type="transmembrane region" description="Helical; Name=2" evidence="3">
    <location>
        <begin position="514"/>
        <end position="534"/>
    </location>
</feature>
<feature type="topological domain" description="Extracellular" evidence="8">
    <location>
        <begin position="535"/>
        <end position="548"/>
    </location>
</feature>
<feature type="transmembrane region" description="Helical; Name=3" evidence="3">
    <location>
        <begin position="549"/>
        <end position="569"/>
    </location>
</feature>
<feature type="topological domain" description="Cytoplasmic" evidence="8">
    <location>
        <begin position="570"/>
        <end position="581"/>
    </location>
</feature>
<feature type="transmembrane region" description="Helical; Name=4" evidence="3">
    <location>
        <begin position="582"/>
        <end position="602"/>
    </location>
</feature>
<feature type="topological domain" description="Extracellular" evidence="8">
    <location>
        <begin position="603"/>
        <end position="622"/>
    </location>
</feature>
<feature type="transmembrane region" description="Helical; Name=5" evidence="3">
    <location>
        <begin position="623"/>
        <end position="643"/>
    </location>
</feature>
<feature type="topological domain" description="Cytoplasmic" evidence="8">
    <location>
        <begin position="644"/>
        <end position="667"/>
    </location>
</feature>
<feature type="transmembrane region" description="Helical; Name=6" evidence="3">
    <location>
        <begin position="668"/>
        <end position="688"/>
    </location>
</feature>
<feature type="topological domain" description="Extracellular" evidence="8">
    <location>
        <begin position="689"/>
        <end position="695"/>
    </location>
</feature>
<feature type="transmembrane region" description="Helical; Name=7" evidence="3">
    <location>
        <begin position="696"/>
        <end position="716"/>
    </location>
</feature>
<feature type="topological domain" description="Cytoplasmic" evidence="8">
    <location>
        <begin position="717"/>
        <end position="739"/>
    </location>
</feature>
<feature type="domain" description="EGF-like 1" evidence="4">
    <location>
        <begin position="20"/>
        <end position="57"/>
    </location>
</feature>
<feature type="domain" description="EGF-like 2; calcium-binding" evidence="4">
    <location>
        <begin position="58"/>
        <end position="107"/>
    </location>
</feature>
<feature type="domain" description="EGF-like 3; calcium-binding" evidence="4">
    <location>
        <begin position="108"/>
        <end position="157"/>
    </location>
</feature>
<feature type="domain" description="GAIN-B" evidence="5">
    <location>
        <begin position="293"/>
        <end position="468"/>
    </location>
</feature>
<feature type="region of interest" description="GPS" evidence="5">
    <location>
        <begin position="418"/>
        <end position="468"/>
    </location>
</feature>
<feature type="site" description="Cleavage; by autolysis" evidence="5">
    <location>
        <begin position="455"/>
        <end position="456"/>
    </location>
</feature>
<feature type="glycosylation site" description="N-linked (GlcNAc...) asparagine" evidence="3">
    <location>
        <position position="21"/>
    </location>
</feature>
<feature type="glycosylation site" description="N-linked (GlcNAc...) asparagine" evidence="3">
    <location>
        <position position="176"/>
    </location>
</feature>
<feature type="glycosylation site" description="N-linked (GlcNAc...) asparagine" evidence="3">
    <location>
        <position position="226"/>
    </location>
</feature>
<feature type="glycosylation site" description="N-linked (GlcNAc...) asparagine" evidence="3">
    <location>
        <position position="237"/>
    </location>
</feature>
<feature type="glycosylation site" description="N-linked (GlcNAc...) asparagine" evidence="3">
    <location>
        <position position="298"/>
    </location>
</feature>
<feature type="glycosylation site" description="N-linked (GlcNAc...) asparagine" evidence="3">
    <location>
        <position position="422"/>
    </location>
</feature>
<feature type="glycosylation site" description="N-linked (GlcNAc...) asparagine" evidence="3">
    <location>
        <position position="430"/>
    </location>
</feature>
<feature type="glycosylation site" description="N-linked (GlcNAc...) asparagine" evidence="3">
    <location>
        <position position="444"/>
    </location>
</feature>
<feature type="disulfide bond" evidence="4">
    <location>
        <begin position="22"/>
        <end position="33"/>
    </location>
</feature>
<feature type="disulfide bond" evidence="4">
    <location>
        <begin position="27"/>
        <end position="42"/>
    </location>
</feature>
<feature type="disulfide bond" evidence="4">
    <location>
        <begin position="44"/>
        <end position="56"/>
    </location>
</feature>
<feature type="disulfide bond" evidence="4">
    <location>
        <begin position="62"/>
        <end position="74"/>
    </location>
</feature>
<feature type="disulfide bond" evidence="4">
    <location>
        <begin position="68"/>
        <end position="83"/>
    </location>
</feature>
<feature type="disulfide bond" evidence="4">
    <location>
        <begin position="85"/>
        <end position="106"/>
    </location>
</feature>
<feature type="disulfide bond" evidence="4">
    <location>
        <begin position="112"/>
        <end position="124"/>
    </location>
</feature>
<feature type="disulfide bond" evidence="4">
    <location>
        <begin position="118"/>
        <end position="133"/>
    </location>
</feature>
<feature type="disulfide bond" evidence="4">
    <location>
        <begin position="135"/>
        <end position="156"/>
    </location>
</feature>
<feature type="disulfide bond" evidence="5">
    <location>
        <begin position="418"/>
        <end position="450"/>
    </location>
</feature>
<feature type="disulfide bond" evidence="5">
    <location>
        <begin position="438"/>
        <end position="452"/>
    </location>
</feature>
<feature type="sequence conflict" description="In Ref. 1; AAK62363." evidence="8" ref="1">
    <original>T</original>
    <variation>I</variation>
    <location>
        <position position="289"/>
    </location>
</feature>
<feature type="sequence conflict" description="In Ref. 3; AAH17134." evidence="8" ref="3">
    <location>
        <position position="313"/>
    </location>
</feature>